<evidence type="ECO:0000269" key="1">
    <source>
    </source>
</evidence>
<evidence type="ECO:0000269" key="2">
    <source>
    </source>
</evidence>
<evidence type="ECO:0000269" key="3">
    <source>
    </source>
</evidence>
<evidence type="ECO:0000303" key="4">
    <source>
    </source>
</evidence>
<evidence type="ECO:0000303" key="5">
    <source>
    </source>
</evidence>
<evidence type="ECO:0000303" key="6">
    <source>
    </source>
</evidence>
<evidence type="ECO:0000305" key="7"/>
<evidence type="ECO:0000312" key="8">
    <source>
        <dbReference type="EMBL" id="KAF4644963.1"/>
    </source>
</evidence>
<evidence type="ECO:0000312" key="9">
    <source>
        <dbReference type="Proteomes" id="UP000557509"/>
    </source>
</evidence>
<evidence type="ECO:0007744" key="10">
    <source>
        <dbReference type="PDB" id="3QYQ"/>
    </source>
</evidence>
<evidence type="ECO:0007744" key="11">
    <source>
        <dbReference type="PDB" id="4EIV"/>
    </source>
</evidence>
<evidence type="ECO:0007829" key="12">
    <source>
        <dbReference type="PDB" id="3QYQ"/>
    </source>
</evidence>
<evidence type="ECO:0007829" key="13">
    <source>
        <dbReference type="PDB" id="4EIV"/>
    </source>
</evidence>
<sequence>MATEQIYKQFTSRTLLNFFEVAALTDGETNESVAAVCKIAAKDPAIVGVSVRPAFVRFIRQELVKSAPEVAGIKVCAAVNFPEGTGTPDTVSLEAVGALKDGADEIECLIDWRRMNENVADGESRIRLLVSEVKKVVGPKTLKVVLSGGELQGGDIISRAAVAALEGGADFLQTSSGLGATHATMFTVHLISIALREYMVRENERIRVEGINREGAAVRCIGIKIEVGDVHMAETADFLMQMIFENGPRSIVRDKFRVGGGFNLLKELRDCYESWDSVGVSPDTSP</sequence>
<reference evidence="9" key="1">
    <citation type="submission" date="2020-03" db="EMBL/GenBank/DDBJ databases">
        <title>Genome sequence of Toxoplasma gondii RH-88 strain.</title>
        <authorList>
            <person name="Lorenzi H.A."/>
            <person name="Venepally P."/>
            <person name="Rozenberg A."/>
            <person name="Sibley D."/>
        </authorList>
    </citation>
    <scope>NUCLEOTIDE SEQUENCE [LARGE SCALE GENOMIC DNA]</scope>
    <source>
        <strain evidence="9">RH-88</strain>
    </source>
</reference>
<reference evidence="7" key="2">
    <citation type="journal article" date="2009" name="Exp. Parasitol.">
        <title>Toxoplasma gondii: Identification and characterization of bradyzoite-specific deoxyribose phosphate aldolase-like gene (TgDPA).</title>
        <authorList>
            <person name="Ueno A."/>
            <person name="Dautu G."/>
            <person name="Munyaka B."/>
            <person name="Carmen G."/>
            <person name="Kobayashi Y."/>
            <person name="Igarashi M."/>
        </authorList>
    </citation>
    <scope>DEVELOPMENTAL STAGE</scope>
    <source>
        <strain evidence="4">ATCC 50611 / Me49</strain>
        <strain evidence="4">Beverley</strain>
        <strain evidence="4">RH</strain>
    </source>
</reference>
<reference evidence="7" key="3">
    <citation type="journal article" date="2010" name="Mol. Biochem. Parasitol.">
        <title>Toxoplasma gondii deoxyribose phosphate aldolase-like protein (TgDPA) interacts with actin depolymerizing factor (TgADF) to enhance the actin filament dynamics in the bradyzoite stage.</title>
        <authorList>
            <person name="Ueno A."/>
            <person name="Dautu G."/>
            <person name="Saiki E."/>
            <person name="Haga K."/>
            <person name="Igarashi M."/>
        </authorList>
    </citation>
    <scope>FUNCTION</scope>
    <scope>INTERACTION WITH ADF</scope>
    <scope>SUBCELLULAR LOCATION</scope>
    <scope>DEVELOPMENTAL STAGE</scope>
    <source>
        <strain evidence="5">RH</strain>
    </source>
</reference>
<reference evidence="10 11" key="4">
    <citation type="journal article" date="2015" name="J. Mol. Biol.">
        <title>Structural and functional divergence of the aldolase fold in Toxoplasma gondii.</title>
        <authorList>
            <person name="Tonkin M.L."/>
            <person name="Halavaty A.S."/>
            <person name="Ramaswamy R."/>
            <person name="Ruan J."/>
            <person name="Igarashi M."/>
            <person name="Ngo H.M."/>
            <person name="Boulanger M.J."/>
        </authorList>
    </citation>
    <scope>X-RAY CRYSTALLOGRAPHY (1.37 ANGSTROMS) OF 6-286</scope>
    <scope>FUNCTION</scope>
    <scope>SUBUNIT</scope>
</reference>
<feature type="chain" id="PRO_0000460465" description="Divergent deoxyribose-phosphate aldolase-like protein">
    <location>
        <begin position="1"/>
        <end position="286"/>
    </location>
</feature>
<feature type="helix" evidence="13">
    <location>
        <begin position="6"/>
        <end position="16"/>
    </location>
</feature>
<feature type="strand" evidence="13">
    <location>
        <begin position="19"/>
        <end position="23"/>
    </location>
</feature>
<feature type="helix" evidence="13">
    <location>
        <begin position="30"/>
        <end position="41"/>
    </location>
</feature>
<feature type="strand" evidence="13">
    <location>
        <begin position="42"/>
        <end position="44"/>
    </location>
</feature>
<feature type="strand" evidence="13">
    <location>
        <begin position="47"/>
        <end position="51"/>
    </location>
</feature>
<feature type="helix" evidence="13">
    <location>
        <begin position="53"/>
        <end position="55"/>
    </location>
</feature>
<feature type="helix" evidence="13">
    <location>
        <begin position="56"/>
        <end position="61"/>
    </location>
</feature>
<feature type="helix" evidence="13">
    <location>
        <begin position="63"/>
        <end position="65"/>
    </location>
</feature>
<feature type="helix" evidence="13">
    <location>
        <begin position="68"/>
        <end position="72"/>
    </location>
</feature>
<feature type="strand" evidence="13">
    <location>
        <begin position="73"/>
        <end position="80"/>
    </location>
</feature>
<feature type="turn" evidence="13">
    <location>
        <begin position="81"/>
        <end position="83"/>
    </location>
</feature>
<feature type="helix" evidence="13">
    <location>
        <begin position="88"/>
        <end position="100"/>
    </location>
</feature>
<feature type="strand" evidence="13">
    <location>
        <begin position="104"/>
        <end position="109"/>
    </location>
</feature>
<feature type="helix" evidence="13">
    <location>
        <begin position="113"/>
        <end position="117"/>
    </location>
</feature>
<feature type="helix" evidence="13">
    <location>
        <begin position="119"/>
        <end position="137"/>
    </location>
</feature>
<feature type="strand" evidence="13">
    <location>
        <begin position="140"/>
        <end position="145"/>
    </location>
</feature>
<feature type="turn" evidence="12">
    <location>
        <begin position="148"/>
        <end position="150"/>
    </location>
</feature>
<feature type="strand" evidence="12">
    <location>
        <begin position="151"/>
        <end position="153"/>
    </location>
</feature>
<feature type="helix" evidence="13">
    <location>
        <begin position="154"/>
        <end position="167"/>
    </location>
</feature>
<feature type="strand" evidence="13">
    <location>
        <begin position="170"/>
        <end position="173"/>
    </location>
</feature>
<feature type="strand" evidence="13">
    <location>
        <begin position="177"/>
        <end position="180"/>
    </location>
</feature>
<feature type="helix" evidence="13">
    <location>
        <begin position="185"/>
        <end position="199"/>
    </location>
</feature>
<feature type="strand" evidence="13">
    <location>
        <begin position="222"/>
        <end position="226"/>
    </location>
</feature>
<feature type="helix" evidence="13">
    <location>
        <begin position="232"/>
        <end position="246"/>
    </location>
</feature>
<feature type="helix" evidence="13">
    <location>
        <begin position="248"/>
        <end position="250"/>
    </location>
</feature>
<feature type="turn" evidence="13">
    <location>
        <begin position="253"/>
        <end position="255"/>
    </location>
</feature>
<feature type="strand" evidence="13">
    <location>
        <begin position="256"/>
        <end position="260"/>
    </location>
</feature>
<feature type="helix" evidence="13">
    <location>
        <begin position="262"/>
        <end position="273"/>
    </location>
</feature>
<organism evidence="9">
    <name type="scientific">Toxoplasma gondii</name>
    <dbReference type="NCBI Taxonomy" id="5811"/>
    <lineage>
        <taxon>Eukaryota</taxon>
        <taxon>Sar</taxon>
        <taxon>Alveolata</taxon>
        <taxon>Apicomplexa</taxon>
        <taxon>Conoidasida</taxon>
        <taxon>Coccidia</taxon>
        <taxon>Eucoccidiorida</taxon>
        <taxon>Eimeriorina</taxon>
        <taxon>Sarcocystidae</taxon>
        <taxon>Toxoplasma</taxon>
    </lineage>
</organism>
<name>DPA_TOXGO</name>
<comment type="function">
    <text evidence="2 3">Involved in regulation of actin dynamics.</text>
</comment>
<comment type="subunit">
    <text evidence="2 3">Homodimer (PubMed:25284756). Interacts with ADF; the interaction enhances ADF activity in disassembly of filamentous actin and inhibition of actin polymerization (PubMed:20433874).</text>
</comment>
<comment type="subcellular location">
    <subcellularLocation>
        <location evidence="2">Cytoplasm</location>
    </subcellularLocation>
</comment>
<comment type="developmental stage">
    <text evidence="1 2">Expressed in bradyzoites (at protein level) (PubMed:18950626, PubMed:20433874). No or low level expression in tachyzoites (at protein level) (PubMed:18950626).</text>
</comment>
<comment type="caution">
    <text evidence="3">Likely diverged to the point of losing deoxyribose-phosphate aldolase enzymatic activity (PubMed:25284756). The residues implicated in substrate binding and the key catalytic residue are not conserved compared to catalytically active deoxyribose-phosphate aldolases (PubMed:25284756). No activity was observed in the assays using 2-deoxy-D-ribose 5-phosphate as substrate (PubMed:25284756).</text>
</comment>
<proteinExistence type="evidence at protein level"/>
<dbReference type="EMBL" id="JAAUHK010000189">
    <property type="protein sequence ID" value="KAF4644963.1"/>
    <property type="molecule type" value="Genomic_DNA"/>
</dbReference>
<dbReference type="PDB" id="3QYQ">
    <property type="method" value="X-ray"/>
    <property type="resolution" value="1.80 A"/>
    <property type="chains" value="A/B/C/D=6-281"/>
</dbReference>
<dbReference type="PDB" id="4EIV">
    <property type="method" value="X-ray"/>
    <property type="resolution" value="1.37 A"/>
    <property type="chains" value="A/B=6-286"/>
</dbReference>
<dbReference type="PDBsum" id="3QYQ"/>
<dbReference type="PDBsum" id="4EIV"/>
<dbReference type="SMR" id="A0A7J6KBZ0"/>
<dbReference type="VEuPathDB" id="ToxoDB:TGME49_318750"/>
<dbReference type="OMA" id="HATMFMV"/>
<dbReference type="Proteomes" id="UP000557509">
    <property type="component" value="Unassembled WGS sequence"/>
</dbReference>
<dbReference type="GO" id="GO:0005737">
    <property type="term" value="C:cytoplasm"/>
    <property type="evidence" value="ECO:0000314"/>
    <property type="project" value="UniProtKB"/>
</dbReference>
<dbReference type="GO" id="GO:0008047">
    <property type="term" value="F:enzyme activator activity"/>
    <property type="evidence" value="ECO:0000314"/>
    <property type="project" value="UniProtKB"/>
</dbReference>
<dbReference type="GO" id="GO:0016829">
    <property type="term" value="F:lyase activity"/>
    <property type="evidence" value="ECO:0007669"/>
    <property type="project" value="InterPro"/>
</dbReference>
<dbReference type="GO" id="GO:0016052">
    <property type="term" value="P:carbohydrate catabolic process"/>
    <property type="evidence" value="ECO:0007669"/>
    <property type="project" value="TreeGrafter"/>
</dbReference>
<dbReference type="GO" id="GO:0009264">
    <property type="term" value="P:deoxyribonucleotide catabolic process"/>
    <property type="evidence" value="ECO:0007669"/>
    <property type="project" value="InterPro"/>
</dbReference>
<dbReference type="GO" id="GO:0046386">
    <property type="term" value="P:deoxyribose phosphate catabolic process"/>
    <property type="evidence" value="ECO:0007669"/>
    <property type="project" value="UniProtKB-UniPathway"/>
</dbReference>
<dbReference type="Gene3D" id="3.20.20.70">
    <property type="entry name" value="Aldolase class I"/>
    <property type="match status" value="1"/>
</dbReference>
<dbReference type="InterPro" id="IPR013785">
    <property type="entry name" value="Aldolase_TIM"/>
</dbReference>
<dbReference type="InterPro" id="IPR011343">
    <property type="entry name" value="DeoC"/>
</dbReference>
<dbReference type="InterPro" id="IPR002915">
    <property type="entry name" value="DeoC/FbaB/LacD_aldolase"/>
</dbReference>
<dbReference type="PANTHER" id="PTHR10889">
    <property type="entry name" value="DEOXYRIBOSE-PHOSPHATE ALDOLASE"/>
    <property type="match status" value="1"/>
</dbReference>
<dbReference type="PANTHER" id="PTHR10889:SF1">
    <property type="entry name" value="DEOXYRIBOSE-PHOSPHATE ALDOLASE"/>
    <property type="match status" value="1"/>
</dbReference>
<dbReference type="SMART" id="SM01133">
    <property type="entry name" value="DeoC"/>
    <property type="match status" value="1"/>
</dbReference>
<dbReference type="SUPFAM" id="SSF51569">
    <property type="entry name" value="Aldolase"/>
    <property type="match status" value="1"/>
</dbReference>
<gene>
    <name evidence="6" type="primary">DPA</name>
    <name evidence="8" type="ORF">TGRH88_007790</name>
</gene>
<protein>
    <recommendedName>
        <fullName evidence="6">Divergent deoxyribose-phosphate aldolase-like protein</fullName>
        <shortName evidence="4 5 6">TgDPA</shortName>
    </recommendedName>
    <alternativeName>
        <fullName evidence="6">Divergent 2-deoxyribose 5-phosphate aldolase-like protein</fullName>
    </alternativeName>
    <alternativeName>
        <fullName evidence="6">Divergent dR5P aldolase-like protein</fullName>
    </alternativeName>
</protein>
<keyword id="KW-0002">3D-structure</keyword>
<keyword id="KW-0963">Cytoplasm</keyword>
<keyword id="KW-1185">Reference proteome</keyword>
<accession>A0A7J6KBZ0</accession>